<accession>P49861</accession>
<feature type="chain" id="PRO_0000020965" description="Scaffolding domain delta">
    <location>
        <begin position="1"/>
        <end position="103"/>
    </location>
</feature>
<feature type="chain" id="PRO_0000020966" description="Major capsid protein">
    <location>
        <begin position="104"/>
        <end position="385"/>
    </location>
</feature>
<feature type="coiled-coil region" evidence="2">
    <location>
        <begin position="1"/>
        <end position="57"/>
    </location>
</feature>
<feature type="cross-link" description="Isoaspartyl lysine isopeptide (Lys-Asn) (interchain with N-356)" evidence="3">
    <location>
        <position position="169"/>
    </location>
</feature>
<feature type="cross-link" description="Isoaspartyl lysine isopeptide (Asn-Lys) (interchain with K-169)" evidence="3">
    <location>
        <position position="356"/>
    </location>
</feature>
<feature type="mutagenesis site" description="Reduced cleavage efficiency." evidence="8">
    <original>K</original>
    <variation>L</variation>
    <location>
        <position position="103"/>
    </location>
</feature>
<feature type="mutagenesis site" description="Loss of ability to form cross-links between subunits." evidence="8">
    <original>K</original>
    <variation>Y</variation>
    <location>
        <position position="169"/>
    </location>
</feature>
<feature type="mutagenesis site" description="Loss of cleavage and cross-linking." evidence="8">
    <original>N</original>
    <variation>D</variation>
    <location>
        <position position="356"/>
    </location>
</feature>
<feature type="mutagenesis site" description="No loss in the ability to form cross-links." evidence="8">
    <original>C</original>
    <variation>S</variation>
    <location>
        <position position="362"/>
    </location>
</feature>
<feature type="helix" evidence="27">
    <location>
        <begin position="77"/>
        <end position="88"/>
    </location>
</feature>
<feature type="strand" evidence="27">
    <location>
        <begin position="91"/>
        <end position="96"/>
    </location>
</feature>
<feature type="strand" evidence="27">
    <location>
        <begin position="101"/>
        <end position="103"/>
    </location>
</feature>
<feature type="turn" evidence="25">
    <location>
        <begin position="109"/>
        <end position="112"/>
    </location>
</feature>
<feature type="helix" evidence="25">
    <location>
        <begin position="113"/>
        <end position="115"/>
    </location>
</feature>
<feature type="strand" evidence="25">
    <location>
        <begin position="119"/>
        <end position="125"/>
    </location>
</feature>
<feature type="helix" evidence="26">
    <location>
        <begin position="134"/>
        <end position="137"/>
    </location>
</feature>
<feature type="strand" evidence="26">
    <location>
        <begin position="138"/>
        <end position="142"/>
    </location>
</feature>
<feature type="strand" evidence="26">
    <location>
        <begin position="145"/>
        <end position="147"/>
    </location>
</feature>
<feature type="strand" evidence="26">
    <location>
        <begin position="149"/>
        <end position="151"/>
    </location>
</feature>
<feature type="strand" evidence="25">
    <location>
        <begin position="161"/>
        <end position="163"/>
    </location>
</feature>
<feature type="strand" evidence="26">
    <location>
        <begin position="178"/>
        <end position="180"/>
    </location>
</feature>
<feature type="strand" evidence="26">
    <location>
        <begin position="184"/>
        <end position="193"/>
    </location>
</feature>
<feature type="helix" evidence="26">
    <location>
        <begin position="194"/>
        <end position="196"/>
    </location>
</feature>
<feature type="strand" evidence="26">
    <location>
        <begin position="197"/>
        <end position="199"/>
    </location>
</feature>
<feature type="helix" evidence="26">
    <location>
        <begin position="200"/>
        <end position="224"/>
    </location>
</feature>
<feature type="turn" evidence="26">
    <location>
        <begin position="236"/>
        <end position="238"/>
    </location>
</feature>
<feature type="helix" evidence="26">
    <location>
        <begin position="245"/>
        <end position="247"/>
    </location>
</feature>
<feature type="helix" evidence="26">
    <location>
        <begin position="254"/>
        <end position="264"/>
    </location>
</feature>
<feature type="helix" evidence="26">
    <location>
        <begin position="265"/>
        <end position="268"/>
    </location>
</feature>
<feature type="strand" evidence="26">
    <location>
        <begin position="274"/>
        <end position="277"/>
    </location>
</feature>
<feature type="helix" evidence="26">
    <location>
        <begin position="279"/>
        <end position="285"/>
    </location>
</feature>
<feature type="turn" evidence="27">
    <location>
        <begin position="291"/>
        <end position="293"/>
    </location>
</feature>
<feature type="strand" evidence="27">
    <location>
        <begin position="294"/>
        <end position="297"/>
    </location>
</feature>
<feature type="strand" evidence="26">
    <location>
        <begin position="300"/>
        <end position="302"/>
    </location>
</feature>
<feature type="strand" evidence="26">
    <location>
        <begin position="305"/>
        <end position="308"/>
    </location>
</feature>
<feature type="strand" evidence="25">
    <location>
        <begin position="311"/>
        <end position="315"/>
    </location>
</feature>
<feature type="strand" evidence="26">
    <location>
        <begin position="323"/>
        <end position="327"/>
    </location>
</feature>
<feature type="helix" evidence="26">
    <location>
        <begin position="329"/>
        <end position="332"/>
    </location>
</feature>
<feature type="strand" evidence="26">
    <location>
        <begin position="333"/>
        <end position="349"/>
    </location>
</feature>
<feature type="helix" evidence="26">
    <location>
        <begin position="352"/>
        <end position="355"/>
    </location>
</feature>
<feature type="strand" evidence="26">
    <location>
        <begin position="357"/>
        <end position="371"/>
    </location>
</feature>
<feature type="helix" evidence="26">
    <location>
        <begin position="373"/>
        <end position="375"/>
    </location>
</feature>
<feature type="strand" evidence="26">
    <location>
        <begin position="376"/>
        <end position="380"/>
    </location>
</feature>
<protein>
    <recommendedName>
        <fullName evidence="9">Major capsid protein</fullName>
    </recommendedName>
    <alternativeName>
        <fullName evidence="11">Gene product 5</fullName>
        <shortName evidence="11">gp5</shortName>
    </alternativeName>
    <alternativeName>
        <fullName evidence="10">Major head protein</fullName>
    </alternativeName>
    <component>
        <recommendedName>
            <fullName>Scaffolding domain delta</fullName>
        </recommendedName>
    </component>
</protein>
<gene>
    <name type="primary">5</name>
</gene>
<comment type="function">
    <text evidence="3 4 7 8">Assembles to form an icosahedral capsid of 66 nm, with a T=7 laevo symmetry (PubMed:11000116, PubMed:21276801). Responsible for its self-assembly into a procapsid. The phage does not need to encode a separate scaffolfing protein because its capsid protein contains the delta domain that carries that function.</text>
</comment>
<comment type="subunit">
    <text evidence="3 5 6">Homopentamer and homohexamer; isoaspartyl lysine isopeptide-linked (PubMed:11000116). Interacts with the portal protein (PubMed:37293963, PubMed:37327331).</text>
</comment>
<comment type="interaction">
    <interactant intactId="EBI-15611310">
        <id>P49861</id>
    </interactant>
    <interactant intactId="EBI-16087766">
        <id>P49860</id>
        <label>4</label>
    </interactant>
    <organismsDiffer>false</organismsDiffer>
    <experiments>3</experiments>
</comment>
<comment type="interaction">
    <interactant intactId="EBI-15611310">
        <id>P49861</id>
    </interactant>
    <interactant intactId="EBI-15611310">
        <id>P49861</id>
        <label>5</label>
    </interactant>
    <organismsDiffer>false</organismsDiffer>
    <experiments>9</experiments>
</comment>
<comment type="subcellular location">
    <molecule>Major capsid protein</molecule>
    <subcellularLocation>
        <location evidence="3 5 6">Virion</location>
    </subcellularLocation>
    <text evidence="5 6">Forms the icosahedral capsid shell which contains 420 major capsid proteins.</text>
</comment>
<comment type="domain">
    <molecule>Scaffolding domain delta</molecule>
    <text evidence="1 6">The scaffolding domain delta has a role of scaffold allowing the self-assembly of the capsid protein (By similarity). In prohead I, the scaffold domain forms rigid helix-turn-strand structures on the interior surfaces of all capsomers and, around the portal, forms trimeric coiled-coil towers, 2 per surrounding capsomer (PubMed:37327331).</text>
</comment>
<comment type="PTM">
    <molecule>Scaffolding domain delta</molecule>
    <text evidence="8">The scaffolding domain delta is cleaved by the viral protease and lost after assembly.</text>
</comment>
<comment type="PTM">
    <text evidence="3">The major capsid proteins are covalently cross-linked.</text>
</comment>
<comment type="similarity">
    <text evidence="11">Belongs to the HK97 phage major capsid protein family.</text>
</comment>
<comment type="online information" name="Virus Particle ExploreR db">
    <link uri="https://viperdb.org/Info_Page.php?VDB=2fte"/>
    <text>Icosahedral capsid structure of expansion Intermediate IV</text>
</comment>
<comment type="online information" name="Virus Particle ExploreR db">
    <link uri="https://viperdb.org/Info_Page.php?VDB=2ft1"/>
    <text>Icosahedral capsid structure of head II</text>
</comment>
<comment type="online information" name="Virus Particle ExploreR db">
    <link uri="https://viperdb.org/Info_Page.php?VDB=2fs3"/>
    <text>Icosahedral capsid structure of head I mutant K169Y</text>
</comment>
<comment type="online information" name="Virus Particle ExploreR db">
    <link uri="https://viperdb.org/Info_Page.php?VDB=2fsy"/>
    <text>Icosahedral capsid structure of pepsin-treated Expansion Intermediate IV</text>
</comment>
<comment type="online information" name="Virus Particle ExploreR db">
    <link uri="https://viperdb.org/Info_Page.php?VDB=2frp"/>
    <text>Icosahedral capsid structure of expansion Intermediate IV</text>
</comment>
<comment type="online information" name="Virus Particle ExploreR db">
    <link uri="https://viperdb.org/Info_Page.php?VDB=1ohg"/>
    <text>Icosahedral empty mature capsid structure</text>
</comment>
<proteinExistence type="evidence at protein level"/>
<sequence>MSELALIQKAIEESQQKMTQLFDAQKAEIESTGQVSKQLQSDLMKVQEELTKSGTRLFDLEQKLASGAENPGEKKSFSERAAEELIKSWDGKQGTFGAKTFNKSLGSDADSAGSLIQPMQIPGIIMPGLRRLTIRDLLAQGRTSSNALEYVREEVFTNNADVVAEKALKPESDITFSKQTANVKTIAHWVQASRQVMDDAPMLQSYINNRLMYGLALKEEGQLLNGDGTGDNLEGLNKVATAYDTSLNATGDTRADIIAHAIYQVTESEFSASGIVLNPRDWHNIALLKDNEGRYIFGGPQAFTSNIMWGLPVVPTKAQAAGTFTVGGFDMASQVWDRMDATVEVSREDRDNFVKNMLTILCEERLALAHYRPTAIIKGTFSSGS</sequence>
<keyword id="KW-0002">3D-structure</keyword>
<keyword id="KW-0167">Capsid protein</keyword>
<keyword id="KW-0175">Coiled coil</keyword>
<keyword id="KW-0903">Direct protein sequencing</keyword>
<keyword id="KW-1017">Isopeptide bond</keyword>
<keyword id="KW-0426">Late protein</keyword>
<keyword id="KW-1185">Reference proteome</keyword>
<keyword id="KW-1145">T=7 icosahedral capsid protein</keyword>
<keyword id="KW-0118">Viral capsid assembly</keyword>
<keyword id="KW-1188">Viral release from host cell</keyword>
<keyword id="KW-0946">Virion</keyword>
<organismHost>
    <name type="scientific">Escherichia coli</name>
    <dbReference type="NCBI Taxonomy" id="562"/>
</organismHost>
<evidence type="ECO:0000250" key="1">
    <source>
        <dbReference type="UniProtKB" id="Q6QGD8"/>
    </source>
</evidence>
<evidence type="ECO:0000255" key="2"/>
<evidence type="ECO:0000269" key="3">
    <source>
    </source>
</evidence>
<evidence type="ECO:0000269" key="4">
    <source>
    </source>
</evidence>
<evidence type="ECO:0000269" key="5">
    <source>
    </source>
</evidence>
<evidence type="ECO:0000269" key="6">
    <source>
    </source>
</evidence>
<evidence type="ECO:0000269" key="7">
    <source>
    </source>
</evidence>
<evidence type="ECO:0000269" key="8">
    <source>
    </source>
</evidence>
<evidence type="ECO:0000303" key="9">
    <source>
    </source>
</evidence>
<evidence type="ECO:0000303" key="10">
    <source>
    </source>
</evidence>
<evidence type="ECO:0000305" key="11"/>
<evidence type="ECO:0007744" key="12">
    <source>
        <dbReference type="PDB" id="1OHG"/>
    </source>
</evidence>
<evidence type="ECO:0007744" key="13">
    <source>
        <dbReference type="PDB" id="2FRP"/>
    </source>
</evidence>
<evidence type="ECO:0007744" key="14">
    <source>
        <dbReference type="PDB" id="2FS3"/>
    </source>
</evidence>
<evidence type="ECO:0007744" key="15">
    <source>
        <dbReference type="PDB" id="2FSY"/>
    </source>
</evidence>
<evidence type="ECO:0007744" key="16">
    <source>
        <dbReference type="PDB" id="2FT1"/>
    </source>
</evidence>
<evidence type="ECO:0007744" key="17">
    <source>
        <dbReference type="PDB" id="2FTE"/>
    </source>
</evidence>
<evidence type="ECO:0007744" key="18">
    <source>
        <dbReference type="PDB" id="2GP1"/>
    </source>
</evidence>
<evidence type="ECO:0007744" key="19">
    <source>
        <dbReference type="PDB" id="3DDX"/>
    </source>
</evidence>
<evidence type="ECO:0007744" key="20">
    <source>
        <dbReference type="PDB" id="3E8K"/>
    </source>
</evidence>
<evidence type="ECO:0007744" key="21">
    <source>
        <dbReference type="PDB" id="3J1A"/>
    </source>
</evidence>
<evidence type="ECO:0007744" key="22">
    <source>
        <dbReference type="PDB" id="3QPR"/>
    </source>
</evidence>
<evidence type="ECO:0007744" key="23">
    <source>
        <dbReference type="PDB" id="8CFA"/>
    </source>
</evidence>
<evidence type="ECO:0007744" key="24">
    <source>
        <dbReference type="PDB" id="8FQK"/>
    </source>
</evidence>
<evidence type="ECO:0007829" key="25">
    <source>
        <dbReference type="PDB" id="1OHG"/>
    </source>
</evidence>
<evidence type="ECO:0007829" key="26">
    <source>
        <dbReference type="PDB" id="8CFA"/>
    </source>
</evidence>
<evidence type="ECO:0007829" key="27">
    <source>
        <dbReference type="PDB" id="8FQK"/>
    </source>
</evidence>
<name>CAPSD_BPHK7</name>
<reference key="1">
    <citation type="journal article" date="1995" name="J. Mol. Biol.">
        <title>Genetic basis of bacteriophage HK97 prohead assembly.</title>
        <authorList>
            <person name="Duda R.L."/>
            <person name="Martincic K."/>
            <person name="Hendrix R.W."/>
        </authorList>
    </citation>
    <scope>NUCLEOTIDE SEQUENCE [GENOMIC DNA]</scope>
    <scope>MUTAGENESIS OF LYS-103; LYS-169; ASN-356 AND CYS-362</scope>
    <scope>FUNCTION</scope>
    <scope>PROTEOLYTIC CLEAVAGE</scope>
</reference>
<reference key="2">
    <citation type="journal article" date="2000" name="J. Mol. Biol.">
        <title>Genomic sequences of bacteriophages HK97 and HK022: pervasive genetic mosaicism in the lambdoid bacteriophages.</title>
        <authorList>
            <person name="Juhala R.J."/>
            <person name="Ford M.E."/>
            <person name="Duda R.L."/>
            <person name="Youlton A."/>
            <person name="Hatfull G.F."/>
            <person name="Hendrix R.W."/>
        </authorList>
    </citation>
    <scope>NUCLEOTIDE SEQUENCE [GENOMIC DNA]</scope>
</reference>
<reference key="3">
    <citation type="journal article" date="1995" name="FEMS Microbiol. Rev.">
        <title>Bacteriophage HK97 head assembly.</title>
        <authorList>
            <person name="Duda R.L."/>
            <person name="Martincic K."/>
            <person name="Xie Z."/>
            <person name="Hendrix R.W."/>
        </authorList>
    </citation>
    <scope>FUNCTION</scope>
</reference>
<reference key="4">
    <citation type="journal article" date="1995" name="J. Mol. Biol.">
        <title>Structural transitions during bacteriophage HK97 head assembly.</title>
        <authorList>
            <person name="Duda R.L."/>
            <person name="Hempel J."/>
            <person name="Michel H."/>
            <person name="Shabanowitz J."/>
            <person name="Hunt D."/>
            <person name="Hendrix R.W."/>
        </authorList>
    </citation>
    <scope>CHARACTERIZATION</scope>
    <scope>PARTIAL PROTEIN SEQUENCE</scope>
</reference>
<reference key="5">
    <citation type="journal article" date="2000" name="Science">
        <title>Topologically linked protein rings in the bacteriophage HK97 capsid.</title>
        <authorList>
            <person name="Wikoff W.R."/>
            <person name="Liljas L."/>
            <person name="Duda R.L."/>
            <person name="Tsuruta H."/>
            <person name="Hendrix R.W."/>
            <person name="Johnson J.E."/>
        </authorList>
    </citation>
    <scope>CROSS-LINK ASN-LYS INTERCHAIN</scope>
    <scope>SUBCELLULAR LOCATION</scope>
    <scope>FUNCTION</scope>
    <scope>SUBUNIT</scope>
</reference>
<reference key="6">
    <citation type="journal article" date="2001" name="Science">
        <title>Virus maturation involving large subunit rotations and local refolding.</title>
        <authorList>
            <person name="Conway J.F."/>
            <person name="Wikoff W.R."/>
            <person name="Cheng N."/>
            <person name="Duda R.L."/>
            <person name="Hendrix R.W."/>
            <person name="Johnson J.E."/>
            <person name="Steven A.C."/>
        </authorList>
    </citation>
    <scope>STRUCTURE BY ELECTRON MICROSCOPY OF 128-383</scope>
</reference>
<reference evidence="12" key="7">
    <citation type="journal article" date="2003" name="J. Mol. Biol.">
        <title>The refined structure of a protein catenane: the HK97 bacteriophage capsid at 3.44 A resolution.</title>
        <authorList>
            <person name="Helgstrand C."/>
            <person name="Wikoff W.R."/>
            <person name="Duda R.L."/>
            <person name="Hendrix R.W."/>
            <person name="Johnson J.E."/>
            <person name="Liljas L."/>
        </authorList>
    </citation>
    <scope>X-RAY CRYSTALLOGRAPHY (3.45 ANGSTROMS) OF 104-385</scope>
</reference>
<reference evidence="13 14 15 16 17" key="8">
    <citation type="journal article" date="2006" name="Structure">
        <title>Capsid conformational sampling in HK97 maturation visualized by X-ray crystallography and cryo-EM.</title>
        <authorList>
            <person name="Gan L."/>
            <person name="Speir J.A."/>
            <person name="Conway J.F."/>
            <person name="Lander G."/>
            <person name="Cheng N."/>
            <person name="Firek B.A."/>
            <person name="Hendrix R.W."/>
            <person name="Duda R.L."/>
            <person name="Liljas L."/>
            <person name="Johnson J.E."/>
        </authorList>
    </citation>
    <scope>X-RAY CRYSTALLOGRAPHY (3.80 ANGSTROMS) OF 104-385</scope>
</reference>
<reference evidence="19" key="9">
    <citation type="journal article" date="2008" name="Structure">
        <title>Virus capsid expansion driven by the capture of mobile surface loops.</title>
        <authorList>
            <person name="Lee K.K."/>
            <person name="Gan L."/>
            <person name="Tsuruta H."/>
            <person name="Moyer C."/>
            <person name="Conway J.F."/>
            <person name="Duda R.L."/>
            <person name="Hendrix R.W."/>
            <person name="Steven A.C."/>
            <person name="Johnson J.E."/>
        </authorList>
    </citation>
    <scope>STRUCTURE BY NMR OF 104-385</scope>
</reference>
<reference evidence="18 20" key="10">
    <citation type="journal article" date="2009" name="Nature">
        <title>An unexpected twist in viral capsid maturation.</title>
        <authorList>
            <person name="Gertsman I."/>
            <person name="Gan L."/>
            <person name="Guttman M."/>
            <person name="Lee K."/>
            <person name="Speir J.A."/>
            <person name="Duda R.L."/>
            <person name="Hendrix R.W."/>
            <person name="Komives E.A."/>
            <person name="Johnson J.E."/>
        </authorList>
    </citation>
    <scope>X-RAY CRYSTALLOGRAPHY (5.20 ANGSTROMS) OF 104-385</scope>
    <scope>X-RAY CRYSTALLOGRAPHY (3.65 ANGSTROMS) OF 104-158 AND 172-385</scope>
</reference>
<reference evidence="22" key="11">
    <citation type="journal article" date="2011" name="J. Mol. Biol.">
        <title>The Prohead-I structure of bacteriophage HK97: implications for scaffold-mediated control of particle assembly and maturation.</title>
        <authorList>
            <person name="Huang R.K."/>
            <person name="Khayat R."/>
            <person name="Lee K.K."/>
            <person name="Gertsman I."/>
            <person name="Duda R.L."/>
            <person name="Hendrix R.W."/>
            <person name="Johnson J.E."/>
        </authorList>
    </citation>
    <scope>X-RAY CRYSTALLOGRAPHY (5.20 ANGSTROMS)</scope>
    <scope>FUNCTION</scope>
</reference>
<reference evidence="21" key="12">
    <citation type="journal article" date="2012" name="J. Virol.">
        <title>Sequence and structural characterization of great salt lake bacteriophage CW02, a member of the T7-like supergroup.</title>
        <authorList>
            <person name="Shen P.S."/>
            <person name="Domek M.J."/>
            <person name="Sanz-Garcia E."/>
            <person name="Makaju A."/>
            <person name="Taylor R.M."/>
            <person name="Hoggan R."/>
            <person name="Culumber M.D."/>
            <person name="Oberg C.J."/>
            <person name="Breakwell D.P."/>
            <person name="Prince J.T."/>
            <person name="Belnap D.M."/>
        </authorList>
    </citation>
    <scope>STRUCTURE BY ELECTRON MICROSCOPY (16.00 ANGSTROMS) OF 182-380</scope>
    <scope>FUNCTION</scope>
</reference>
<reference evidence="23" key="13">
    <citation type="journal article" date="2023" name="Nucleic Acids Res.">
        <title>Insights into a viral motor: the structure of the HK97 packaging termination assembly.</title>
        <authorList>
            <person name="Hawkins D.E.D.P."/>
            <person name="Bayfield O.W."/>
            <person name="Fung H.K.H."/>
            <person name="Grba D.N."/>
            <person name="Huet A."/>
            <person name="Conway J.F."/>
            <person name="Antson A.A."/>
        </authorList>
    </citation>
    <scope>STRUCTURE BY ELECTRON MICROSCOPY (3.06 ANGSTROMS)</scope>
    <scope>INTERACTION WITH THE PORTAL PROTEIN (MAJOR CAPSID PROTEIN)</scope>
    <scope>SUBCELLULAR LOCATION (MAJOR CAPSID PROTEIN)</scope>
</reference>
<reference evidence="24" key="14">
    <citation type="journal article" date="2023" name="Sci. Adv.">
        <title>A symmetry mismatch unraveled: How phage HK97 scaffold flexibly accommodates a 12-fold pore at a 5-fold viral capsid vertex.</title>
        <authorList>
            <person name="Huet A."/>
            <person name="Oh B."/>
            <person name="Maurer J."/>
            <person name="Duda R.L."/>
            <person name="Conway J.F."/>
        </authorList>
    </citation>
    <scope>STRUCTURE BY ELECTRON MICROSCOPY (3.50 ANGSTROMS) OF PROHEAD I</scope>
    <scope>INTERACTION WITH THE PORTAL PROTEIN (MAJOR CAPSID PROTEIN)</scope>
    <scope>SUBCELLULAR LOCATION (MAJOR CAPSID PROTEIN)</scope>
    <scope>DOMAIN (SCAFFOLDING DOMAIN DELTA)</scope>
</reference>
<organism>
    <name type="scientific">Enterobacteria phage HK97</name>
    <name type="common">Bacteriophage HK97</name>
    <dbReference type="NCBI Taxonomy" id="2681617"/>
    <lineage>
        <taxon>Viruses</taxon>
        <taxon>Duplodnaviria</taxon>
        <taxon>Heunggongvirae</taxon>
        <taxon>Uroviricota</taxon>
        <taxon>Caudoviricetes</taxon>
        <taxon>Hendrixvirinae</taxon>
        <taxon>Byrnievirus</taxon>
        <taxon>Byrnievirus HK97</taxon>
    </lineage>
</organism>
<dbReference type="EMBL" id="U18319">
    <property type="protein sequence ID" value="AAA80204.1"/>
    <property type="molecule type" value="Genomic_DNA"/>
</dbReference>
<dbReference type="EMBL" id="AF069529">
    <property type="protein sequence ID" value="AAF31090.1"/>
    <property type="molecule type" value="Genomic_DNA"/>
</dbReference>
<dbReference type="PIR" id="S54392">
    <property type="entry name" value="S54392"/>
</dbReference>
<dbReference type="RefSeq" id="NP_037701.1">
    <property type="nucleotide sequence ID" value="NC_002167.1"/>
</dbReference>
<dbReference type="PDB" id="1IF0">
    <property type="method" value="EM"/>
    <property type="resolution" value="12.00 A"/>
    <property type="chains" value="A/B/C/D/E/F/G=128-383"/>
</dbReference>
<dbReference type="PDB" id="1OHG">
    <property type="method" value="X-ray"/>
    <property type="resolution" value="3.45 A"/>
    <property type="chains" value="A/B/C/D/E/F/G=104-385"/>
</dbReference>
<dbReference type="PDB" id="2FRP">
    <property type="method" value="X-ray"/>
    <property type="resolution" value="7.50 A"/>
    <property type="chains" value="A/B/C/D/E/F/G=104-385"/>
</dbReference>
<dbReference type="PDB" id="2FS3">
    <property type="method" value="X-ray"/>
    <property type="resolution" value="4.20 A"/>
    <property type="chains" value="A/B/C/D/E/F/G=104-385"/>
</dbReference>
<dbReference type="PDB" id="2FSY">
    <property type="method" value="X-ray"/>
    <property type="resolution" value="3.80 A"/>
    <property type="chains" value="A/B/C/D/E/F/G=104-385"/>
</dbReference>
<dbReference type="PDB" id="2FT1">
    <property type="method" value="X-ray"/>
    <property type="resolution" value="3.90 A"/>
    <property type="chains" value="A/B/C/D/E/F/G=104-385"/>
</dbReference>
<dbReference type="PDB" id="2FTE">
    <property type="method" value="EM"/>
    <property type="chains" value="A/B/C/D/E/F/G=104-385"/>
</dbReference>
<dbReference type="PDB" id="2GP1">
    <property type="method" value="X-ray"/>
    <property type="resolution" value="5.20 A"/>
    <property type="chains" value="A/B/C/D/E/F/G=104-385"/>
</dbReference>
<dbReference type="PDB" id="3DDX">
    <property type="method" value="EM"/>
    <property type="chains" value="A/B/C/D/E/F/G=104-385"/>
</dbReference>
<dbReference type="PDB" id="3E8K">
    <property type="method" value="X-ray"/>
    <property type="resolution" value="3.65 A"/>
    <property type="chains" value="A/B/C/D/E/F/G=104-158, A/B/C/D/E/F/G=172-385"/>
</dbReference>
<dbReference type="PDB" id="3J1A">
    <property type="method" value="EM"/>
    <property type="resolution" value="16.00 A"/>
    <property type="chains" value="A/B/C/D/E/F/G=182-380"/>
</dbReference>
<dbReference type="PDB" id="3QPR">
    <property type="method" value="X-ray"/>
    <property type="resolution" value="5.20 A"/>
    <property type="chains" value="A/B/C/D/E/F/G=1-385"/>
</dbReference>
<dbReference type="PDB" id="8CFA">
    <property type="method" value="EM"/>
    <property type="resolution" value="3.06 A"/>
    <property type="chains" value="A/B/C/D/E/F/G=1-385"/>
</dbReference>
<dbReference type="PDB" id="8FQK">
    <property type="method" value="EM"/>
    <property type="resolution" value="3.50 A"/>
    <property type="chains" value="A/B/C/D/E/F/G=1-385"/>
</dbReference>
<dbReference type="PDBsum" id="1IF0"/>
<dbReference type="PDBsum" id="1OHG"/>
<dbReference type="PDBsum" id="2FRP"/>
<dbReference type="PDBsum" id="2FS3"/>
<dbReference type="PDBsum" id="2FSY"/>
<dbReference type="PDBsum" id="2FT1"/>
<dbReference type="PDBsum" id="2FTE"/>
<dbReference type="PDBsum" id="2GP1"/>
<dbReference type="PDBsum" id="3DDX"/>
<dbReference type="PDBsum" id="3E8K"/>
<dbReference type="PDBsum" id="3J1A"/>
<dbReference type="PDBsum" id="3QPR"/>
<dbReference type="PDBsum" id="8CFA"/>
<dbReference type="PDBsum" id="8FQK"/>
<dbReference type="EMDB" id="EMD-29390"/>
<dbReference type="SMR" id="P49861"/>
<dbReference type="DIP" id="DIP-29163N"/>
<dbReference type="IntAct" id="P49861">
    <property type="interactions" value="1"/>
</dbReference>
<dbReference type="GeneID" id="1262530"/>
<dbReference type="KEGG" id="vg:1262530"/>
<dbReference type="EvolutionaryTrace" id="P49861"/>
<dbReference type="Proteomes" id="UP000002576">
    <property type="component" value="Genome"/>
</dbReference>
<dbReference type="GO" id="GO:0039620">
    <property type="term" value="C:T=7 icosahedral viral capsid"/>
    <property type="evidence" value="ECO:0007669"/>
    <property type="project" value="UniProtKB-KW"/>
</dbReference>
<dbReference type="GO" id="GO:0019028">
    <property type="term" value="C:viral capsid"/>
    <property type="evidence" value="ECO:0000314"/>
    <property type="project" value="UniProtKB"/>
</dbReference>
<dbReference type="GO" id="GO:0042802">
    <property type="term" value="F:identical protein binding"/>
    <property type="evidence" value="ECO:0000353"/>
    <property type="project" value="IntAct"/>
</dbReference>
<dbReference type="GO" id="GO:0046797">
    <property type="term" value="P:viral procapsid maturation"/>
    <property type="evidence" value="ECO:0000315"/>
    <property type="project" value="CACAO"/>
</dbReference>
<dbReference type="Gene3D" id="3.30.2320.10">
    <property type="entry name" value="hypothetical protein PF0899 domain"/>
    <property type="match status" value="1"/>
</dbReference>
<dbReference type="Gene3D" id="3.30.2400.10">
    <property type="entry name" value="Major capsid protein gp5"/>
    <property type="match status" value="1"/>
</dbReference>
<dbReference type="InterPro" id="IPR024455">
    <property type="entry name" value="Phage_capsid"/>
</dbReference>
<dbReference type="InterPro" id="IPR054612">
    <property type="entry name" value="Phage_capsid-like_C"/>
</dbReference>
<dbReference type="NCBIfam" id="TIGR01554">
    <property type="entry name" value="major_cap_HK97"/>
    <property type="match status" value="1"/>
</dbReference>
<dbReference type="Pfam" id="PF05065">
    <property type="entry name" value="Phage_capsid"/>
    <property type="match status" value="1"/>
</dbReference>
<dbReference type="SUPFAM" id="SSF56563">
    <property type="entry name" value="Major capsid protein gp5"/>
    <property type="match status" value="1"/>
</dbReference>